<dbReference type="EC" id="7.1.1.-" evidence="1"/>
<dbReference type="EMBL" id="CU928162">
    <property type="protein sequence ID" value="CAR08921.2"/>
    <property type="molecule type" value="Genomic_DNA"/>
</dbReference>
<dbReference type="RefSeq" id="WP_000156686.1">
    <property type="nucleotide sequence ID" value="NC_011745.1"/>
</dbReference>
<dbReference type="SMR" id="B7MXV5"/>
<dbReference type="KEGG" id="ecq:ECED1_2740"/>
<dbReference type="HOGENOM" id="CLU_007100_1_5_6"/>
<dbReference type="Proteomes" id="UP000000748">
    <property type="component" value="Chromosome"/>
</dbReference>
<dbReference type="GO" id="GO:0005886">
    <property type="term" value="C:plasma membrane"/>
    <property type="evidence" value="ECO:0007669"/>
    <property type="project" value="UniProtKB-SubCell"/>
</dbReference>
<dbReference type="GO" id="GO:0008137">
    <property type="term" value="F:NADH dehydrogenase (ubiquinone) activity"/>
    <property type="evidence" value="ECO:0007669"/>
    <property type="project" value="InterPro"/>
</dbReference>
<dbReference type="GO" id="GO:0050136">
    <property type="term" value="F:NADH:ubiquinone reductase (non-electrogenic) activity"/>
    <property type="evidence" value="ECO:0007669"/>
    <property type="project" value="UniProtKB-UniRule"/>
</dbReference>
<dbReference type="GO" id="GO:0048038">
    <property type="term" value="F:quinone binding"/>
    <property type="evidence" value="ECO:0007669"/>
    <property type="project" value="UniProtKB-KW"/>
</dbReference>
<dbReference type="GO" id="GO:0042773">
    <property type="term" value="P:ATP synthesis coupled electron transport"/>
    <property type="evidence" value="ECO:0007669"/>
    <property type="project" value="InterPro"/>
</dbReference>
<dbReference type="HAMAP" id="MF_00445">
    <property type="entry name" value="NDH1_NuoN_1"/>
    <property type="match status" value="1"/>
</dbReference>
<dbReference type="InterPro" id="IPR010096">
    <property type="entry name" value="NADH-Q_OxRdtase_suN/2"/>
</dbReference>
<dbReference type="InterPro" id="IPR001750">
    <property type="entry name" value="ND/Mrp_TM"/>
</dbReference>
<dbReference type="NCBIfam" id="TIGR01770">
    <property type="entry name" value="NDH_I_N"/>
    <property type="match status" value="1"/>
</dbReference>
<dbReference type="NCBIfam" id="NF004439">
    <property type="entry name" value="PRK05777.1-1"/>
    <property type="match status" value="1"/>
</dbReference>
<dbReference type="PANTHER" id="PTHR22773">
    <property type="entry name" value="NADH DEHYDROGENASE"/>
    <property type="match status" value="1"/>
</dbReference>
<dbReference type="Pfam" id="PF00361">
    <property type="entry name" value="Proton_antipo_M"/>
    <property type="match status" value="1"/>
</dbReference>
<keyword id="KW-0997">Cell inner membrane</keyword>
<keyword id="KW-1003">Cell membrane</keyword>
<keyword id="KW-0472">Membrane</keyword>
<keyword id="KW-0520">NAD</keyword>
<keyword id="KW-0874">Quinone</keyword>
<keyword id="KW-1278">Translocase</keyword>
<keyword id="KW-0812">Transmembrane</keyword>
<keyword id="KW-1133">Transmembrane helix</keyword>
<keyword id="KW-0813">Transport</keyword>
<keyword id="KW-0830">Ubiquinone</keyword>
<proteinExistence type="inferred from homology"/>
<evidence type="ECO:0000255" key="1">
    <source>
        <dbReference type="HAMAP-Rule" id="MF_00445"/>
    </source>
</evidence>
<name>NUON_ECO81</name>
<reference key="1">
    <citation type="journal article" date="2009" name="PLoS Genet.">
        <title>Organised genome dynamics in the Escherichia coli species results in highly diverse adaptive paths.</title>
        <authorList>
            <person name="Touchon M."/>
            <person name="Hoede C."/>
            <person name="Tenaillon O."/>
            <person name="Barbe V."/>
            <person name="Baeriswyl S."/>
            <person name="Bidet P."/>
            <person name="Bingen E."/>
            <person name="Bonacorsi S."/>
            <person name="Bouchier C."/>
            <person name="Bouvet O."/>
            <person name="Calteau A."/>
            <person name="Chiapello H."/>
            <person name="Clermont O."/>
            <person name="Cruveiller S."/>
            <person name="Danchin A."/>
            <person name="Diard M."/>
            <person name="Dossat C."/>
            <person name="Karoui M.E."/>
            <person name="Frapy E."/>
            <person name="Garry L."/>
            <person name="Ghigo J.M."/>
            <person name="Gilles A.M."/>
            <person name="Johnson J."/>
            <person name="Le Bouguenec C."/>
            <person name="Lescat M."/>
            <person name="Mangenot S."/>
            <person name="Martinez-Jehanne V."/>
            <person name="Matic I."/>
            <person name="Nassif X."/>
            <person name="Oztas S."/>
            <person name="Petit M.A."/>
            <person name="Pichon C."/>
            <person name="Rouy Z."/>
            <person name="Ruf C.S."/>
            <person name="Schneider D."/>
            <person name="Tourret J."/>
            <person name="Vacherie B."/>
            <person name="Vallenet D."/>
            <person name="Medigue C."/>
            <person name="Rocha E.P.C."/>
            <person name="Denamur E."/>
        </authorList>
    </citation>
    <scope>NUCLEOTIDE SEQUENCE [LARGE SCALE GENOMIC DNA]</scope>
    <source>
        <strain>ED1a</strain>
    </source>
</reference>
<organism>
    <name type="scientific">Escherichia coli O81 (strain ED1a)</name>
    <dbReference type="NCBI Taxonomy" id="585397"/>
    <lineage>
        <taxon>Bacteria</taxon>
        <taxon>Pseudomonadati</taxon>
        <taxon>Pseudomonadota</taxon>
        <taxon>Gammaproteobacteria</taxon>
        <taxon>Enterobacterales</taxon>
        <taxon>Enterobacteriaceae</taxon>
        <taxon>Escherichia</taxon>
    </lineage>
</organism>
<protein>
    <recommendedName>
        <fullName evidence="1">NADH-quinone oxidoreductase subunit N</fullName>
        <ecNumber evidence="1">7.1.1.-</ecNumber>
    </recommendedName>
    <alternativeName>
        <fullName evidence="1">NADH dehydrogenase I subunit N</fullName>
    </alternativeName>
    <alternativeName>
        <fullName evidence="1">NDH-1 subunit N</fullName>
    </alternativeName>
</protein>
<sequence>MTITPQNLIALLPLLIVGLTVVVVMLSIAWRRNHFLNATLSVIGLNAALVSLWFVGQAGAMDVTPLMRVDGFAMLYTGLVLLASLATCTFAYPWLEGYNDNKDEFYLLVLIAALGGILLANANHLASLFLGIELISLPLFGLVGYAFRQKRSLEASIKYTILSAAASSFLLFGMALVYAQSGDLSFVALGKKLGDGMLNEPLLLAGFGLMIVGLGFKLSLVPFHLWTPDVYQGAPAPVSTFLATASKIAIFGVVMRLFLYAPVGDSEAIRVVLAIIAFASIIFGNLMALSQTNIKRLLGYSSISHLGYLLVALIALQTGEMSMEAVGVYLVGYLFSSLGAFGVVSLMSSPYRGPDADSLFSYRGLFWHRPILAAVMTVMMLSLAGIPMTLGFIGKFYVLAVGVQAHLWWLVGAVVVGSAIGLYYYLRVAVSLYLHAPEQPGRDAPSNWQYSAGGIVVLISALLVLVLGVWPQPLISIVRLAMPLM</sequence>
<comment type="function">
    <text evidence="1">NDH-1 shuttles electrons from NADH, via FMN and iron-sulfur (Fe-S) centers, to quinones in the respiratory chain. The immediate electron acceptor for the enzyme in this species is believed to be ubiquinone. Couples the redox reaction to proton translocation (for every two electrons transferred, four hydrogen ions are translocated across the cytoplasmic membrane), and thus conserves the redox energy in a proton gradient.</text>
</comment>
<comment type="catalytic activity">
    <reaction evidence="1">
        <text>a quinone + NADH + 5 H(+)(in) = a quinol + NAD(+) + 4 H(+)(out)</text>
        <dbReference type="Rhea" id="RHEA:57888"/>
        <dbReference type="ChEBI" id="CHEBI:15378"/>
        <dbReference type="ChEBI" id="CHEBI:24646"/>
        <dbReference type="ChEBI" id="CHEBI:57540"/>
        <dbReference type="ChEBI" id="CHEBI:57945"/>
        <dbReference type="ChEBI" id="CHEBI:132124"/>
    </reaction>
</comment>
<comment type="subunit">
    <text evidence="1">NDH-1 is composed of 13 different subunits. Subunits NuoA, H, J, K, L, M, N constitute the membrane sector of the complex.</text>
</comment>
<comment type="subcellular location">
    <subcellularLocation>
        <location evidence="1">Cell inner membrane</location>
        <topology evidence="1">Multi-pass membrane protein</topology>
    </subcellularLocation>
</comment>
<comment type="similarity">
    <text evidence="1">Belongs to the complex I subunit 2 family.</text>
</comment>
<accession>B7MXV5</accession>
<gene>
    <name evidence="1" type="primary">nuoN</name>
    <name type="ordered locus">ECED1_2740</name>
</gene>
<feature type="chain" id="PRO_1000184916" description="NADH-quinone oxidoreductase subunit N">
    <location>
        <begin position="1"/>
        <end position="485"/>
    </location>
</feature>
<feature type="transmembrane region" description="Helical" evidence="1">
    <location>
        <begin position="8"/>
        <end position="28"/>
    </location>
</feature>
<feature type="transmembrane region" description="Helical" evidence="1">
    <location>
        <begin position="35"/>
        <end position="55"/>
    </location>
</feature>
<feature type="transmembrane region" description="Helical" evidence="1">
    <location>
        <begin position="71"/>
        <end position="91"/>
    </location>
</feature>
<feature type="transmembrane region" description="Helical" evidence="1">
    <location>
        <begin position="105"/>
        <end position="125"/>
    </location>
</feature>
<feature type="transmembrane region" description="Helical" evidence="1">
    <location>
        <begin position="127"/>
        <end position="147"/>
    </location>
</feature>
<feature type="transmembrane region" description="Helical" evidence="1">
    <location>
        <begin position="159"/>
        <end position="179"/>
    </location>
</feature>
<feature type="transmembrane region" description="Helical" evidence="1">
    <location>
        <begin position="203"/>
        <end position="223"/>
    </location>
</feature>
<feature type="transmembrane region" description="Helical" evidence="1">
    <location>
        <begin position="235"/>
        <end position="255"/>
    </location>
</feature>
<feature type="transmembrane region" description="Helical" evidence="1">
    <location>
        <begin position="271"/>
        <end position="291"/>
    </location>
</feature>
<feature type="transmembrane region" description="Helical" evidence="1">
    <location>
        <begin position="297"/>
        <end position="317"/>
    </location>
</feature>
<feature type="transmembrane region" description="Helical" evidence="1">
    <location>
        <begin position="326"/>
        <end position="346"/>
    </location>
</feature>
<feature type="transmembrane region" description="Helical" evidence="1">
    <location>
        <begin position="373"/>
        <end position="393"/>
    </location>
</feature>
<feature type="transmembrane region" description="Helical" evidence="1">
    <location>
        <begin position="408"/>
        <end position="430"/>
    </location>
</feature>
<feature type="transmembrane region" description="Helical" evidence="1">
    <location>
        <begin position="455"/>
        <end position="475"/>
    </location>
</feature>